<name>LEUD_ECTM1</name>
<sequence length="215" mass="24322">MKAFTQHTGLVCPLDRANVDTDQIIPKQFLKSIKRTGFGPNLFDEWRYLDVGQPNQDNSKRPINKDFVLNFPRYQGASVLLARENFGCGSSREHAPWALDEYGFRTVIAPSFADIFFNNSFKNGLLPIVLKDEEVDALFEQAEATEGYQLTVDLDAQTVTRPDGVQYSFEVDAFRKHCLLNGLDDIGLTLQDQDAIRAFEAKHQQSSPWLFGAIK</sequence>
<dbReference type="EC" id="4.2.1.33" evidence="1"/>
<dbReference type="EMBL" id="CP000680">
    <property type="protein sequence ID" value="ABP85477.1"/>
    <property type="molecule type" value="Genomic_DNA"/>
</dbReference>
<dbReference type="SMR" id="A4XVW1"/>
<dbReference type="STRING" id="399739.Pmen_2722"/>
<dbReference type="KEGG" id="pmy:Pmen_2722"/>
<dbReference type="PATRIC" id="fig|399739.8.peg.2752"/>
<dbReference type="eggNOG" id="COG0066">
    <property type="taxonomic scope" value="Bacteria"/>
</dbReference>
<dbReference type="HOGENOM" id="CLU_081378_0_3_6"/>
<dbReference type="OrthoDB" id="9777465at2"/>
<dbReference type="UniPathway" id="UPA00048">
    <property type="reaction ID" value="UER00071"/>
</dbReference>
<dbReference type="GO" id="GO:0009316">
    <property type="term" value="C:3-isopropylmalate dehydratase complex"/>
    <property type="evidence" value="ECO:0007669"/>
    <property type="project" value="InterPro"/>
</dbReference>
<dbReference type="GO" id="GO:0003861">
    <property type="term" value="F:3-isopropylmalate dehydratase activity"/>
    <property type="evidence" value="ECO:0007669"/>
    <property type="project" value="UniProtKB-UniRule"/>
</dbReference>
<dbReference type="GO" id="GO:0009098">
    <property type="term" value="P:L-leucine biosynthetic process"/>
    <property type="evidence" value="ECO:0007669"/>
    <property type="project" value="UniProtKB-UniRule"/>
</dbReference>
<dbReference type="CDD" id="cd01577">
    <property type="entry name" value="IPMI_Swivel"/>
    <property type="match status" value="1"/>
</dbReference>
<dbReference type="FunFam" id="3.20.19.10:FF:000003">
    <property type="entry name" value="3-isopropylmalate dehydratase small subunit"/>
    <property type="match status" value="1"/>
</dbReference>
<dbReference type="Gene3D" id="3.20.19.10">
    <property type="entry name" value="Aconitase, domain 4"/>
    <property type="match status" value="1"/>
</dbReference>
<dbReference type="HAMAP" id="MF_01031">
    <property type="entry name" value="LeuD_type1"/>
    <property type="match status" value="1"/>
</dbReference>
<dbReference type="InterPro" id="IPR004431">
    <property type="entry name" value="3-IsopropMal_deHydase_ssu"/>
</dbReference>
<dbReference type="InterPro" id="IPR015928">
    <property type="entry name" value="Aconitase/3IPM_dehydase_swvl"/>
</dbReference>
<dbReference type="InterPro" id="IPR000573">
    <property type="entry name" value="AconitaseA/IPMdHydase_ssu_swvl"/>
</dbReference>
<dbReference type="InterPro" id="IPR033940">
    <property type="entry name" value="IPMI_Swivel"/>
</dbReference>
<dbReference type="InterPro" id="IPR050075">
    <property type="entry name" value="LeuD"/>
</dbReference>
<dbReference type="NCBIfam" id="TIGR00171">
    <property type="entry name" value="leuD"/>
    <property type="match status" value="1"/>
</dbReference>
<dbReference type="NCBIfam" id="NF002458">
    <property type="entry name" value="PRK01641.1"/>
    <property type="match status" value="1"/>
</dbReference>
<dbReference type="PANTHER" id="PTHR43345:SF5">
    <property type="entry name" value="3-ISOPROPYLMALATE DEHYDRATASE SMALL SUBUNIT"/>
    <property type="match status" value="1"/>
</dbReference>
<dbReference type="PANTHER" id="PTHR43345">
    <property type="entry name" value="3-ISOPROPYLMALATE DEHYDRATASE SMALL SUBUNIT 2-RELATED-RELATED"/>
    <property type="match status" value="1"/>
</dbReference>
<dbReference type="Pfam" id="PF00694">
    <property type="entry name" value="Aconitase_C"/>
    <property type="match status" value="1"/>
</dbReference>
<dbReference type="SUPFAM" id="SSF52016">
    <property type="entry name" value="LeuD/IlvD-like"/>
    <property type="match status" value="1"/>
</dbReference>
<reference key="1">
    <citation type="submission" date="2007-04" db="EMBL/GenBank/DDBJ databases">
        <title>Complete sequence of Pseudomonas mendocina ymp.</title>
        <authorList>
            <consortium name="US DOE Joint Genome Institute"/>
            <person name="Copeland A."/>
            <person name="Lucas S."/>
            <person name="Lapidus A."/>
            <person name="Barry K."/>
            <person name="Glavina del Rio T."/>
            <person name="Dalin E."/>
            <person name="Tice H."/>
            <person name="Pitluck S."/>
            <person name="Kiss H."/>
            <person name="Brettin T."/>
            <person name="Detter J.C."/>
            <person name="Bruce D."/>
            <person name="Han C."/>
            <person name="Schmutz J."/>
            <person name="Larimer F."/>
            <person name="Land M."/>
            <person name="Hauser L."/>
            <person name="Kyrpides N."/>
            <person name="Mikhailova N."/>
            <person name="Hersman L."/>
            <person name="Dubois J."/>
            <person name="Maurice P."/>
            <person name="Richardson P."/>
        </authorList>
    </citation>
    <scope>NUCLEOTIDE SEQUENCE [LARGE SCALE GENOMIC DNA]</scope>
    <source>
        <strain>ymp</strain>
    </source>
</reference>
<gene>
    <name evidence="1" type="primary">leuD</name>
    <name type="ordered locus">Pmen_2722</name>
</gene>
<evidence type="ECO:0000255" key="1">
    <source>
        <dbReference type="HAMAP-Rule" id="MF_01031"/>
    </source>
</evidence>
<accession>A4XVW1</accession>
<keyword id="KW-0028">Amino-acid biosynthesis</keyword>
<keyword id="KW-0100">Branched-chain amino acid biosynthesis</keyword>
<keyword id="KW-0432">Leucine biosynthesis</keyword>
<keyword id="KW-0456">Lyase</keyword>
<feature type="chain" id="PRO_1000063808" description="3-isopropylmalate dehydratase small subunit">
    <location>
        <begin position="1"/>
        <end position="215"/>
    </location>
</feature>
<organism>
    <name type="scientific">Ectopseudomonas mendocina (strain ymp)</name>
    <name type="common">Pseudomonas mendocina</name>
    <dbReference type="NCBI Taxonomy" id="399739"/>
    <lineage>
        <taxon>Bacteria</taxon>
        <taxon>Pseudomonadati</taxon>
        <taxon>Pseudomonadota</taxon>
        <taxon>Gammaproteobacteria</taxon>
        <taxon>Pseudomonadales</taxon>
        <taxon>Pseudomonadaceae</taxon>
        <taxon>Ectopseudomonas</taxon>
    </lineage>
</organism>
<comment type="function">
    <text evidence="1">Catalyzes the isomerization between 2-isopropylmalate and 3-isopropylmalate, via the formation of 2-isopropylmaleate.</text>
</comment>
<comment type="catalytic activity">
    <reaction evidence="1">
        <text>(2R,3S)-3-isopropylmalate = (2S)-2-isopropylmalate</text>
        <dbReference type="Rhea" id="RHEA:32287"/>
        <dbReference type="ChEBI" id="CHEBI:1178"/>
        <dbReference type="ChEBI" id="CHEBI:35121"/>
        <dbReference type="EC" id="4.2.1.33"/>
    </reaction>
</comment>
<comment type="pathway">
    <text evidence="1">Amino-acid biosynthesis; L-leucine biosynthesis; L-leucine from 3-methyl-2-oxobutanoate: step 2/4.</text>
</comment>
<comment type="subunit">
    <text evidence="1">Heterodimer of LeuC and LeuD.</text>
</comment>
<comment type="similarity">
    <text evidence="1">Belongs to the LeuD family. LeuD type 1 subfamily.</text>
</comment>
<protein>
    <recommendedName>
        <fullName evidence="1">3-isopropylmalate dehydratase small subunit</fullName>
        <ecNumber evidence="1">4.2.1.33</ecNumber>
    </recommendedName>
    <alternativeName>
        <fullName evidence="1">Alpha-IPM isomerase</fullName>
        <shortName evidence="1">IPMI</shortName>
    </alternativeName>
    <alternativeName>
        <fullName evidence="1">Isopropylmalate isomerase</fullName>
    </alternativeName>
</protein>
<proteinExistence type="inferred from homology"/>